<sequence>MEDDEKGGFRGKDGEGKFGRKNAKYKKKVCKFCADKALLAGLDYKRVDILERFVTNRGKIIPRRITGTCGKHQRALAREIRKSRSIGLLPFKVL</sequence>
<name>RS18_LEPBP</name>
<accession>B0SSW0</accession>
<dbReference type="EMBL" id="CP000786">
    <property type="protein sequence ID" value="ABZ98200.1"/>
    <property type="molecule type" value="Genomic_DNA"/>
</dbReference>
<dbReference type="SMR" id="B0SSW0"/>
<dbReference type="STRING" id="456481.LEPBI_I2098"/>
<dbReference type="KEGG" id="lbi:LEPBI_I2098"/>
<dbReference type="HOGENOM" id="CLU_148710_0_3_12"/>
<dbReference type="Proteomes" id="UP000001847">
    <property type="component" value="Chromosome I"/>
</dbReference>
<dbReference type="GO" id="GO:0022627">
    <property type="term" value="C:cytosolic small ribosomal subunit"/>
    <property type="evidence" value="ECO:0007669"/>
    <property type="project" value="TreeGrafter"/>
</dbReference>
<dbReference type="GO" id="GO:0070181">
    <property type="term" value="F:small ribosomal subunit rRNA binding"/>
    <property type="evidence" value="ECO:0007669"/>
    <property type="project" value="TreeGrafter"/>
</dbReference>
<dbReference type="GO" id="GO:0003735">
    <property type="term" value="F:structural constituent of ribosome"/>
    <property type="evidence" value="ECO:0007669"/>
    <property type="project" value="InterPro"/>
</dbReference>
<dbReference type="GO" id="GO:0006412">
    <property type="term" value="P:translation"/>
    <property type="evidence" value="ECO:0007669"/>
    <property type="project" value="UniProtKB-UniRule"/>
</dbReference>
<dbReference type="Gene3D" id="4.10.640.10">
    <property type="entry name" value="Ribosomal protein S18"/>
    <property type="match status" value="1"/>
</dbReference>
<dbReference type="HAMAP" id="MF_00270">
    <property type="entry name" value="Ribosomal_bS18"/>
    <property type="match status" value="1"/>
</dbReference>
<dbReference type="InterPro" id="IPR001648">
    <property type="entry name" value="Ribosomal_bS18"/>
</dbReference>
<dbReference type="InterPro" id="IPR018275">
    <property type="entry name" value="Ribosomal_bS18_CS"/>
</dbReference>
<dbReference type="InterPro" id="IPR036870">
    <property type="entry name" value="Ribosomal_bS18_sf"/>
</dbReference>
<dbReference type="NCBIfam" id="TIGR00165">
    <property type="entry name" value="S18"/>
    <property type="match status" value="1"/>
</dbReference>
<dbReference type="PANTHER" id="PTHR13479">
    <property type="entry name" value="30S RIBOSOMAL PROTEIN S18"/>
    <property type="match status" value="1"/>
</dbReference>
<dbReference type="PANTHER" id="PTHR13479:SF40">
    <property type="entry name" value="SMALL RIBOSOMAL SUBUNIT PROTEIN BS18M"/>
    <property type="match status" value="1"/>
</dbReference>
<dbReference type="Pfam" id="PF01084">
    <property type="entry name" value="Ribosomal_S18"/>
    <property type="match status" value="1"/>
</dbReference>
<dbReference type="PRINTS" id="PR00974">
    <property type="entry name" value="RIBOSOMALS18"/>
</dbReference>
<dbReference type="SUPFAM" id="SSF46911">
    <property type="entry name" value="Ribosomal protein S18"/>
    <property type="match status" value="1"/>
</dbReference>
<dbReference type="PROSITE" id="PS00057">
    <property type="entry name" value="RIBOSOMAL_S18"/>
    <property type="match status" value="1"/>
</dbReference>
<comment type="function">
    <text evidence="1">Binds as a heterodimer with protein bS6 to the central domain of the 16S rRNA, where it helps stabilize the platform of the 30S subunit.</text>
</comment>
<comment type="subunit">
    <text evidence="1">Part of the 30S ribosomal subunit. Forms a tight heterodimer with protein bS6.</text>
</comment>
<comment type="similarity">
    <text evidence="1">Belongs to the bacterial ribosomal protein bS18 family.</text>
</comment>
<organism>
    <name type="scientific">Leptospira biflexa serovar Patoc (strain Patoc 1 / ATCC 23582 / Paris)</name>
    <dbReference type="NCBI Taxonomy" id="456481"/>
    <lineage>
        <taxon>Bacteria</taxon>
        <taxon>Pseudomonadati</taxon>
        <taxon>Spirochaetota</taxon>
        <taxon>Spirochaetia</taxon>
        <taxon>Leptospirales</taxon>
        <taxon>Leptospiraceae</taxon>
        <taxon>Leptospira</taxon>
    </lineage>
</organism>
<proteinExistence type="inferred from homology"/>
<feature type="chain" id="PRO_0000345490" description="Small ribosomal subunit protein bS18">
    <location>
        <begin position="1"/>
        <end position="94"/>
    </location>
</feature>
<protein>
    <recommendedName>
        <fullName evidence="1">Small ribosomal subunit protein bS18</fullName>
    </recommendedName>
    <alternativeName>
        <fullName evidence="2">30S ribosomal protein S18</fullName>
    </alternativeName>
</protein>
<gene>
    <name evidence="1" type="primary">rpsR</name>
    <name type="ordered locus">LEPBI_I2098</name>
</gene>
<evidence type="ECO:0000255" key="1">
    <source>
        <dbReference type="HAMAP-Rule" id="MF_00270"/>
    </source>
</evidence>
<evidence type="ECO:0000305" key="2"/>
<keyword id="KW-1185">Reference proteome</keyword>
<keyword id="KW-0687">Ribonucleoprotein</keyword>
<keyword id="KW-0689">Ribosomal protein</keyword>
<keyword id="KW-0694">RNA-binding</keyword>
<keyword id="KW-0699">rRNA-binding</keyword>
<reference key="1">
    <citation type="journal article" date="2008" name="PLoS ONE">
        <title>Genome sequence of the saprophyte Leptospira biflexa provides insights into the evolution of Leptospira and the pathogenesis of leptospirosis.</title>
        <authorList>
            <person name="Picardeau M."/>
            <person name="Bulach D.M."/>
            <person name="Bouchier C."/>
            <person name="Zuerner R.L."/>
            <person name="Zidane N."/>
            <person name="Wilson P.J."/>
            <person name="Creno S."/>
            <person name="Kuczek E.S."/>
            <person name="Bommezzadri S."/>
            <person name="Davis J.C."/>
            <person name="McGrath A."/>
            <person name="Johnson M.J."/>
            <person name="Boursaux-Eude C."/>
            <person name="Seemann T."/>
            <person name="Rouy Z."/>
            <person name="Coppel R.L."/>
            <person name="Rood J.I."/>
            <person name="Lajus A."/>
            <person name="Davies J.K."/>
            <person name="Medigue C."/>
            <person name="Adler B."/>
        </authorList>
    </citation>
    <scope>NUCLEOTIDE SEQUENCE [LARGE SCALE GENOMIC DNA]</scope>
    <source>
        <strain>Patoc 1 / ATCC 23582 / Paris</strain>
    </source>
</reference>